<accession>P80161</accession>
<reference key="1">
    <citation type="journal article" date="1992" name="J. Gen. Microbiol.">
        <title>The periplasmic flagella of Serpulina (Treponema) hyodysenteriae are composed of two sheath proteins and three core proteins.</title>
        <authorList>
            <person name="Koopman M.B.H."/>
            <person name="Baats E."/>
            <person name="van Vorstenbosch C.J.A.H.V."/>
            <person name="van der Zeijst B.A.M."/>
            <person name="Kusters J.G."/>
        </authorList>
    </citation>
    <scope>PROTEIN SEQUENCE</scope>
    <source>
        <strain>C5</strain>
    </source>
</reference>
<evidence type="ECO:0000305" key="1"/>
<organism>
    <name type="scientific">Brachyspira hyodysenteriae</name>
    <name type="common">Treponema hyodysenteriae</name>
    <dbReference type="NCBI Taxonomy" id="159"/>
    <lineage>
        <taxon>Bacteria</taxon>
        <taxon>Pseudomonadati</taxon>
        <taxon>Spirochaetota</taxon>
        <taxon>Spirochaetia</taxon>
        <taxon>Brachyspirales</taxon>
        <taxon>Brachyspiraceae</taxon>
        <taxon>Brachyspira</taxon>
    </lineage>
</organism>
<sequence>MIINNNISALNANRQLNLTGNSMTK</sequence>
<comment type="function">
    <text>Component of the core of the flagella.</text>
</comment>
<comment type="subunit">
    <text>The flagellum consists of an outer layer composed of two sheath proteins, flaA1 (44 kDa) and flaA2 (35 kDa) around a core that contains three proteins flaB1 (37 kDa), flaB2 (34 kDa) and flaB3 (32 kDa).</text>
</comment>
<comment type="subcellular location">
    <subcellularLocation>
        <location>Periplasmic flagellum</location>
    </subcellularLocation>
    <subcellularLocation>
        <location>Periplasm</location>
    </subcellularLocation>
</comment>
<comment type="similarity">
    <text evidence="1">Belongs to the bacterial flagellin family.</text>
</comment>
<gene>
    <name type="primary">flaB3</name>
</gene>
<name>FLAB3_BRAHO</name>
<proteinExistence type="evidence at protein level"/>
<dbReference type="PIR" id="D47689">
    <property type="entry name" value="D47689"/>
</dbReference>
<dbReference type="SMR" id="P80161"/>
<dbReference type="GO" id="GO:0055040">
    <property type="term" value="C:periplasmic flagellum"/>
    <property type="evidence" value="ECO:0007669"/>
    <property type="project" value="UniProtKB-SubCell"/>
</dbReference>
<protein>
    <recommendedName>
        <fullName>Flagellar filament core protein flaB3</fullName>
    </recommendedName>
    <alternativeName>
        <fullName>32 kDa core protein</fullName>
    </alternativeName>
</protein>
<keyword id="KW-0975">Bacterial flagellum</keyword>
<keyword id="KW-0903">Direct protein sequencing</keyword>
<keyword id="KW-0574">Periplasm</keyword>
<feature type="chain" id="PRO_0000182639" description="Flagellar filament core protein flaB3">
    <location>
        <begin position="1"/>
        <end position="25" status="greater than"/>
    </location>
</feature>
<feature type="non-terminal residue">
    <location>
        <position position="25"/>
    </location>
</feature>